<sequence length="247" mass="27481">MSRKKNRLTGVDALNEAFDAVDHQPLLDHLGVDIQRDLLVLALTHRSFANENGMLPNNERLEFLGDAVLGLSVANKLYEQYPSSPESDVSKMRASIVSRYGLADIAREIDLGNHILLGKGELLTEGRSKDSILADTTEALFGAIFRQHGFETARDVILRLFAYKIDNASARGIHQDWKTTLQEELAQRKRPMAEYSATSVGPDHDLVFTAIVTLEGEEMGRGEGPNKKLAEQEAAHQAFRKLRESRA</sequence>
<evidence type="ECO:0000255" key="1">
    <source>
        <dbReference type="HAMAP-Rule" id="MF_00104"/>
    </source>
</evidence>
<accession>Q8NNV6</accession>
<name>RNC_CORGL</name>
<dbReference type="EC" id="3.1.26.3" evidence="1"/>
<dbReference type="EMBL" id="BA000036">
    <property type="protein sequence ID" value="BAB99467.1"/>
    <property type="molecule type" value="Genomic_DNA"/>
</dbReference>
<dbReference type="EMBL" id="BX927154">
    <property type="protein sequence ID" value="CAF20410.1"/>
    <property type="molecule type" value="Genomic_DNA"/>
</dbReference>
<dbReference type="RefSeq" id="NP_601274.1">
    <property type="nucleotide sequence ID" value="NC_003450.3"/>
</dbReference>
<dbReference type="RefSeq" id="WP_003861938.1">
    <property type="nucleotide sequence ID" value="NC_006958.1"/>
</dbReference>
<dbReference type="SMR" id="Q8NNV6"/>
<dbReference type="STRING" id="196627.cg2273"/>
<dbReference type="GeneID" id="1020026"/>
<dbReference type="KEGG" id="cgb:cg2273"/>
<dbReference type="KEGG" id="cgl:Cgl2074"/>
<dbReference type="PATRIC" id="fig|196627.13.peg.2010"/>
<dbReference type="eggNOG" id="COG0571">
    <property type="taxonomic scope" value="Bacteria"/>
</dbReference>
<dbReference type="HOGENOM" id="CLU_000907_1_2_11"/>
<dbReference type="OrthoDB" id="9805026at2"/>
<dbReference type="BioCyc" id="CORYNE:G18NG-11666-MONOMER"/>
<dbReference type="Proteomes" id="UP000000582">
    <property type="component" value="Chromosome"/>
</dbReference>
<dbReference type="Proteomes" id="UP000001009">
    <property type="component" value="Chromosome"/>
</dbReference>
<dbReference type="GO" id="GO:0005737">
    <property type="term" value="C:cytoplasm"/>
    <property type="evidence" value="ECO:0007669"/>
    <property type="project" value="UniProtKB-SubCell"/>
</dbReference>
<dbReference type="GO" id="GO:0003725">
    <property type="term" value="F:double-stranded RNA binding"/>
    <property type="evidence" value="ECO:0007669"/>
    <property type="project" value="TreeGrafter"/>
</dbReference>
<dbReference type="GO" id="GO:0046872">
    <property type="term" value="F:metal ion binding"/>
    <property type="evidence" value="ECO:0007669"/>
    <property type="project" value="UniProtKB-KW"/>
</dbReference>
<dbReference type="GO" id="GO:0004525">
    <property type="term" value="F:ribonuclease III activity"/>
    <property type="evidence" value="ECO:0007669"/>
    <property type="project" value="UniProtKB-UniRule"/>
</dbReference>
<dbReference type="GO" id="GO:0019843">
    <property type="term" value="F:rRNA binding"/>
    <property type="evidence" value="ECO:0007669"/>
    <property type="project" value="UniProtKB-KW"/>
</dbReference>
<dbReference type="GO" id="GO:0006397">
    <property type="term" value="P:mRNA processing"/>
    <property type="evidence" value="ECO:0007669"/>
    <property type="project" value="UniProtKB-UniRule"/>
</dbReference>
<dbReference type="GO" id="GO:0010468">
    <property type="term" value="P:regulation of gene expression"/>
    <property type="evidence" value="ECO:0007669"/>
    <property type="project" value="TreeGrafter"/>
</dbReference>
<dbReference type="GO" id="GO:0006364">
    <property type="term" value="P:rRNA processing"/>
    <property type="evidence" value="ECO:0007669"/>
    <property type="project" value="UniProtKB-UniRule"/>
</dbReference>
<dbReference type="GO" id="GO:0008033">
    <property type="term" value="P:tRNA processing"/>
    <property type="evidence" value="ECO:0007669"/>
    <property type="project" value="UniProtKB-KW"/>
</dbReference>
<dbReference type="CDD" id="cd10845">
    <property type="entry name" value="DSRM_RNAse_III_family"/>
    <property type="match status" value="1"/>
</dbReference>
<dbReference type="CDD" id="cd00593">
    <property type="entry name" value="RIBOc"/>
    <property type="match status" value="1"/>
</dbReference>
<dbReference type="FunFam" id="1.10.1520.10:FF:000001">
    <property type="entry name" value="Ribonuclease 3"/>
    <property type="match status" value="1"/>
</dbReference>
<dbReference type="Gene3D" id="3.30.160.20">
    <property type="match status" value="1"/>
</dbReference>
<dbReference type="Gene3D" id="1.10.1520.10">
    <property type="entry name" value="Ribonuclease III domain"/>
    <property type="match status" value="1"/>
</dbReference>
<dbReference type="HAMAP" id="MF_00104">
    <property type="entry name" value="RNase_III"/>
    <property type="match status" value="1"/>
</dbReference>
<dbReference type="InterPro" id="IPR014720">
    <property type="entry name" value="dsRBD_dom"/>
</dbReference>
<dbReference type="InterPro" id="IPR011907">
    <property type="entry name" value="RNase_III"/>
</dbReference>
<dbReference type="InterPro" id="IPR000999">
    <property type="entry name" value="RNase_III_dom"/>
</dbReference>
<dbReference type="InterPro" id="IPR036389">
    <property type="entry name" value="RNase_III_sf"/>
</dbReference>
<dbReference type="NCBIfam" id="TIGR02191">
    <property type="entry name" value="RNaseIII"/>
    <property type="match status" value="1"/>
</dbReference>
<dbReference type="PANTHER" id="PTHR11207:SF0">
    <property type="entry name" value="RIBONUCLEASE 3"/>
    <property type="match status" value="1"/>
</dbReference>
<dbReference type="PANTHER" id="PTHR11207">
    <property type="entry name" value="RIBONUCLEASE III"/>
    <property type="match status" value="1"/>
</dbReference>
<dbReference type="Pfam" id="PF00035">
    <property type="entry name" value="dsrm"/>
    <property type="match status" value="1"/>
</dbReference>
<dbReference type="Pfam" id="PF14622">
    <property type="entry name" value="Ribonucleas_3_3"/>
    <property type="match status" value="1"/>
</dbReference>
<dbReference type="SMART" id="SM00358">
    <property type="entry name" value="DSRM"/>
    <property type="match status" value="1"/>
</dbReference>
<dbReference type="SMART" id="SM00535">
    <property type="entry name" value="RIBOc"/>
    <property type="match status" value="1"/>
</dbReference>
<dbReference type="SUPFAM" id="SSF54768">
    <property type="entry name" value="dsRNA-binding domain-like"/>
    <property type="match status" value="1"/>
</dbReference>
<dbReference type="SUPFAM" id="SSF69065">
    <property type="entry name" value="RNase III domain-like"/>
    <property type="match status" value="1"/>
</dbReference>
<dbReference type="PROSITE" id="PS50137">
    <property type="entry name" value="DS_RBD"/>
    <property type="match status" value="1"/>
</dbReference>
<dbReference type="PROSITE" id="PS00517">
    <property type="entry name" value="RNASE_3_1"/>
    <property type="match status" value="1"/>
</dbReference>
<dbReference type="PROSITE" id="PS50142">
    <property type="entry name" value="RNASE_3_2"/>
    <property type="match status" value="1"/>
</dbReference>
<proteinExistence type="inferred from homology"/>
<gene>
    <name evidence="1" type="primary">rnc</name>
    <name type="ordered locus">Cgl2074</name>
    <name type="ordered locus">cg2273</name>
</gene>
<reference key="1">
    <citation type="journal article" date="2003" name="Appl. Microbiol. Biotechnol.">
        <title>The Corynebacterium glutamicum genome: features and impacts on biotechnological processes.</title>
        <authorList>
            <person name="Ikeda M."/>
            <person name="Nakagawa S."/>
        </authorList>
    </citation>
    <scope>NUCLEOTIDE SEQUENCE [LARGE SCALE GENOMIC DNA]</scope>
    <source>
        <strain>ATCC 13032 / DSM 20300 / JCM 1318 / BCRC 11384 / CCUG 27702 / LMG 3730 / NBRC 12168 / NCIMB 10025 / NRRL B-2784 / 534</strain>
    </source>
</reference>
<reference key="2">
    <citation type="journal article" date="2003" name="J. Biotechnol.">
        <title>The complete Corynebacterium glutamicum ATCC 13032 genome sequence and its impact on the production of L-aspartate-derived amino acids and vitamins.</title>
        <authorList>
            <person name="Kalinowski J."/>
            <person name="Bathe B."/>
            <person name="Bartels D."/>
            <person name="Bischoff N."/>
            <person name="Bott M."/>
            <person name="Burkovski A."/>
            <person name="Dusch N."/>
            <person name="Eggeling L."/>
            <person name="Eikmanns B.J."/>
            <person name="Gaigalat L."/>
            <person name="Goesmann A."/>
            <person name="Hartmann M."/>
            <person name="Huthmacher K."/>
            <person name="Kraemer R."/>
            <person name="Linke B."/>
            <person name="McHardy A.C."/>
            <person name="Meyer F."/>
            <person name="Moeckel B."/>
            <person name="Pfefferle W."/>
            <person name="Puehler A."/>
            <person name="Rey D.A."/>
            <person name="Rueckert C."/>
            <person name="Rupp O."/>
            <person name="Sahm H."/>
            <person name="Wendisch V.F."/>
            <person name="Wiegraebe I."/>
            <person name="Tauch A."/>
        </authorList>
    </citation>
    <scope>NUCLEOTIDE SEQUENCE [LARGE SCALE GENOMIC DNA]</scope>
    <source>
        <strain>ATCC 13032 / DSM 20300 / JCM 1318 / BCRC 11384 / CCUG 27702 / LMG 3730 / NBRC 12168 / NCIMB 10025 / NRRL B-2784 / 534</strain>
    </source>
</reference>
<feature type="chain" id="PRO_0000180393" description="Ribonuclease 3">
    <location>
        <begin position="1"/>
        <end position="247"/>
    </location>
</feature>
<feature type="domain" description="RNase III" evidence="1">
    <location>
        <begin position="21"/>
        <end position="149"/>
    </location>
</feature>
<feature type="domain" description="DRBM" evidence="1">
    <location>
        <begin position="176"/>
        <end position="244"/>
    </location>
</feature>
<feature type="active site" evidence="1">
    <location>
        <position position="66"/>
    </location>
</feature>
<feature type="active site" evidence="1">
    <location>
        <position position="138"/>
    </location>
</feature>
<feature type="binding site" evidence="1">
    <location>
        <position position="62"/>
    </location>
    <ligand>
        <name>Mg(2+)</name>
        <dbReference type="ChEBI" id="CHEBI:18420"/>
    </ligand>
</feature>
<feature type="binding site" evidence="1">
    <location>
        <position position="135"/>
    </location>
    <ligand>
        <name>Mg(2+)</name>
        <dbReference type="ChEBI" id="CHEBI:18420"/>
    </ligand>
</feature>
<feature type="binding site" evidence="1">
    <location>
        <position position="138"/>
    </location>
    <ligand>
        <name>Mg(2+)</name>
        <dbReference type="ChEBI" id="CHEBI:18420"/>
    </ligand>
</feature>
<organism>
    <name type="scientific">Corynebacterium glutamicum (strain ATCC 13032 / DSM 20300 / JCM 1318 / BCRC 11384 / CCUG 27702 / LMG 3730 / NBRC 12168 / NCIMB 10025 / NRRL B-2784 / 534)</name>
    <dbReference type="NCBI Taxonomy" id="196627"/>
    <lineage>
        <taxon>Bacteria</taxon>
        <taxon>Bacillati</taxon>
        <taxon>Actinomycetota</taxon>
        <taxon>Actinomycetes</taxon>
        <taxon>Mycobacteriales</taxon>
        <taxon>Corynebacteriaceae</taxon>
        <taxon>Corynebacterium</taxon>
    </lineage>
</organism>
<protein>
    <recommendedName>
        <fullName evidence="1">Ribonuclease 3</fullName>
        <ecNumber evidence="1">3.1.26.3</ecNumber>
    </recommendedName>
    <alternativeName>
        <fullName evidence="1">Ribonuclease III</fullName>
        <shortName evidence="1">RNase III</shortName>
    </alternativeName>
</protein>
<keyword id="KW-0963">Cytoplasm</keyword>
<keyword id="KW-0255">Endonuclease</keyword>
<keyword id="KW-0378">Hydrolase</keyword>
<keyword id="KW-0460">Magnesium</keyword>
<keyword id="KW-0479">Metal-binding</keyword>
<keyword id="KW-0507">mRNA processing</keyword>
<keyword id="KW-0540">Nuclease</keyword>
<keyword id="KW-1185">Reference proteome</keyword>
<keyword id="KW-0694">RNA-binding</keyword>
<keyword id="KW-0698">rRNA processing</keyword>
<keyword id="KW-0699">rRNA-binding</keyword>
<keyword id="KW-0819">tRNA processing</keyword>
<comment type="function">
    <text evidence="1">Digests double-stranded RNA. Involved in the processing of primary rRNA transcript to yield the immediate precursors to the large and small rRNAs (23S and 16S). Processes some mRNAs, and tRNAs when they are encoded in the rRNA operon. Processes pre-crRNA and tracrRNA of type II CRISPR loci if present in the organism.</text>
</comment>
<comment type="catalytic activity">
    <reaction evidence="1">
        <text>Endonucleolytic cleavage to 5'-phosphomonoester.</text>
        <dbReference type="EC" id="3.1.26.3"/>
    </reaction>
</comment>
<comment type="cofactor">
    <cofactor evidence="1">
        <name>Mg(2+)</name>
        <dbReference type="ChEBI" id="CHEBI:18420"/>
    </cofactor>
</comment>
<comment type="subunit">
    <text evidence="1">Homodimer.</text>
</comment>
<comment type="subcellular location">
    <subcellularLocation>
        <location evidence="1">Cytoplasm</location>
    </subcellularLocation>
</comment>
<comment type="similarity">
    <text evidence="1">Belongs to the ribonuclease III family.</text>
</comment>